<gene>
    <name evidence="1" type="primary">fmt</name>
    <name type="ordered locus">SPC_3476</name>
</gene>
<reference key="1">
    <citation type="journal article" date="2009" name="PLoS ONE">
        <title>Salmonella paratyphi C: genetic divergence from Salmonella choleraesuis and pathogenic convergence with Salmonella typhi.</title>
        <authorList>
            <person name="Liu W.-Q."/>
            <person name="Feng Y."/>
            <person name="Wang Y."/>
            <person name="Zou Q.-H."/>
            <person name="Chen F."/>
            <person name="Guo J.-T."/>
            <person name="Peng Y.-H."/>
            <person name="Jin Y."/>
            <person name="Li Y.-G."/>
            <person name="Hu S.-N."/>
            <person name="Johnston R.N."/>
            <person name="Liu G.-R."/>
            <person name="Liu S.-L."/>
        </authorList>
    </citation>
    <scope>NUCLEOTIDE SEQUENCE [LARGE SCALE GENOMIC DNA]</scope>
    <source>
        <strain>RKS4594</strain>
    </source>
</reference>
<accession>C0PZV0</accession>
<evidence type="ECO:0000255" key="1">
    <source>
        <dbReference type="HAMAP-Rule" id="MF_00182"/>
    </source>
</evidence>
<protein>
    <recommendedName>
        <fullName evidence="1">Methionyl-tRNA formyltransferase</fullName>
        <ecNumber evidence="1">2.1.2.9</ecNumber>
    </recommendedName>
</protein>
<feature type="chain" id="PRO_1000190039" description="Methionyl-tRNA formyltransferase">
    <location>
        <begin position="1"/>
        <end position="315"/>
    </location>
</feature>
<feature type="binding site" evidence="1">
    <location>
        <begin position="113"/>
        <end position="116"/>
    </location>
    <ligand>
        <name>(6S)-5,6,7,8-tetrahydrofolate</name>
        <dbReference type="ChEBI" id="CHEBI:57453"/>
    </ligand>
</feature>
<name>FMT_SALPC</name>
<sequence>MSDSLRIIFAGTPDFAARHLDALLTSGHNVVGVFTQPDRPAGRGKKLMPSPVKVLAEEKGLPVFQPVSLRPQENQHLVADLHADVMVVVAYGLILPKAVLDMPRLGCINVHGSLLPRWRGAAPIQRSLWAGDAETGVTIMQMDVGLDTGDMLYKLACPITAEDTSGSLYNKLAELGPQGLITTLKQLADGTATPEAQNEALVTHAEKLSKEEARIDWSLSAAQLERCIRAFNPWPMSWLEIDGQPVKVWQASVIEDATQSLPGTILAATKQGIQVATGKGILNLLSLQPAGKKAMSAQDLLNSRREWFIPGNRLA</sequence>
<dbReference type="EC" id="2.1.2.9" evidence="1"/>
<dbReference type="EMBL" id="CP000857">
    <property type="protein sequence ID" value="ACN47560.1"/>
    <property type="molecule type" value="Genomic_DNA"/>
</dbReference>
<dbReference type="RefSeq" id="WP_001285165.1">
    <property type="nucleotide sequence ID" value="NC_012125.1"/>
</dbReference>
<dbReference type="SMR" id="C0PZV0"/>
<dbReference type="KEGG" id="sei:SPC_3476"/>
<dbReference type="HOGENOM" id="CLU_033347_1_2_6"/>
<dbReference type="Proteomes" id="UP000001599">
    <property type="component" value="Chromosome"/>
</dbReference>
<dbReference type="GO" id="GO:0005829">
    <property type="term" value="C:cytosol"/>
    <property type="evidence" value="ECO:0007669"/>
    <property type="project" value="TreeGrafter"/>
</dbReference>
<dbReference type="GO" id="GO:0004479">
    <property type="term" value="F:methionyl-tRNA formyltransferase activity"/>
    <property type="evidence" value="ECO:0007669"/>
    <property type="project" value="UniProtKB-UniRule"/>
</dbReference>
<dbReference type="CDD" id="cd08646">
    <property type="entry name" value="FMT_core_Met-tRNA-FMT_N"/>
    <property type="match status" value="1"/>
</dbReference>
<dbReference type="CDD" id="cd08704">
    <property type="entry name" value="Met_tRNA_FMT_C"/>
    <property type="match status" value="1"/>
</dbReference>
<dbReference type="FunFam" id="3.10.25.10:FF:000001">
    <property type="entry name" value="Methionyl-tRNA formyltransferase"/>
    <property type="match status" value="1"/>
</dbReference>
<dbReference type="FunFam" id="3.40.50.170:FF:000003">
    <property type="entry name" value="Methionyl-tRNA formyltransferase"/>
    <property type="match status" value="1"/>
</dbReference>
<dbReference type="Gene3D" id="3.10.25.10">
    <property type="entry name" value="Formyl transferase, C-terminal domain"/>
    <property type="match status" value="1"/>
</dbReference>
<dbReference type="Gene3D" id="3.40.50.170">
    <property type="entry name" value="Formyl transferase, N-terminal domain"/>
    <property type="match status" value="1"/>
</dbReference>
<dbReference type="HAMAP" id="MF_00182">
    <property type="entry name" value="Formyl_trans"/>
    <property type="match status" value="1"/>
</dbReference>
<dbReference type="InterPro" id="IPR005794">
    <property type="entry name" value="Fmt"/>
</dbReference>
<dbReference type="InterPro" id="IPR005793">
    <property type="entry name" value="Formyl_trans_C"/>
</dbReference>
<dbReference type="InterPro" id="IPR037022">
    <property type="entry name" value="Formyl_trans_C_sf"/>
</dbReference>
<dbReference type="InterPro" id="IPR002376">
    <property type="entry name" value="Formyl_transf_N"/>
</dbReference>
<dbReference type="InterPro" id="IPR036477">
    <property type="entry name" value="Formyl_transf_N_sf"/>
</dbReference>
<dbReference type="InterPro" id="IPR011034">
    <property type="entry name" value="Formyl_transferase-like_C_sf"/>
</dbReference>
<dbReference type="InterPro" id="IPR001555">
    <property type="entry name" value="GART_AS"/>
</dbReference>
<dbReference type="InterPro" id="IPR044135">
    <property type="entry name" value="Met-tRNA-FMT_C"/>
</dbReference>
<dbReference type="InterPro" id="IPR041711">
    <property type="entry name" value="Met-tRNA-FMT_N"/>
</dbReference>
<dbReference type="NCBIfam" id="TIGR00460">
    <property type="entry name" value="fmt"/>
    <property type="match status" value="1"/>
</dbReference>
<dbReference type="PANTHER" id="PTHR11138">
    <property type="entry name" value="METHIONYL-TRNA FORMYLTRANSFERASE"/>
    <property type="match status" value="1"/>
</dbReference>
<dbReference type="PANTHER" id="PTHR11138:SF5">
    <property type="entry name" value="METHIONYL-TRNA FORMYLTRANSFERASE, MITOCHONDRIAL"/>
    <property type="match status" value="1"/>
</dbReference>
<dbReference type="Pfam" id="PF02911">
    <property type="entry name" value="Formyl_trans_C"/>
    <property type="match status" value="1"/>
</dbReference>
<dbReference type="Pfam" id="PF00551">
    <property type="entry name" value="Formyl_trans_N"/>
    <property type="match status" value="1"/>
</dbReference>
<dbReference type="SUPFAM" id="SSF50486">
    <property type="entry name" value="FMT C-terminal domain-like"/>
    <property type="match status" value="1"/>
</dbReference>
<dbReference type="SUPFAM" id="SSF53328">
    <property type="entry name" value="Formyltransferase"/>
    <property type="match status" value="1"/>
</dbReference>
<dbReference type="PROSITE" id="PS00373">
    <property type="entry name" value="GART"/>
    <property type="match status" value="1"/>
</dbReference>
<comment type="function">
    <text evidence="1">Attaches a formyl group to the free amino group of methionyl-tRNA(fMet). The formyl group appears to play a dual role in the initiator identity of N-formylmethionyl-tRNA by promoting its recognition by IF2 and preventing the misappropriation of this tRNA by the elongation apparatus.</text>
</comment>
<comment type="catalytic activity">
    <reaction evidence="1">
        <text>L-methionyl-tRNA(fMet) + (6R)-10-formyltetrahydrofolate = N-formyl-L-methionyl-tRNA(fMet) + (6S)-5,6,7,8-tetrahydrofolate + H(+)</text>
        <dbReference type="Rhea" id="RHEA:24380"/>
        <dbReference type="Rhea" id="RHEA-COMP:9952"/>
        <dbReference type="Rhea" id="RHEA-COMP:9953"/>
        <dbReference type="ChEBI" id="CHEBI:15378"/>
        <dbReference type="ChEBI" id="CHEBI:57453"/>
        <dbReference type="ChEBI" id="CHEBI:78530"/>
        <dbReference type="ChEBI" id="CHEBI:78844"/>
        <dbReference type="ChEBI" id="CHEBI:195366"/>
        <dbReference type="EC" id="2.1.2.9"/>
    </reaction>
</comment>
<comment type="similarity">
    <text evidence="1">Belongs to the Fmt family.</text>
</comment>
<keyword id="KW-0648">Protein biosynthesis</keyword>
<keyword id="KW-0808">Transferase</keyword>
<proteinExistence type="inferred from homology"/>
<organism>
    <name type="scientific">Salmonella paratyphi C (strain RKS4594)</name>
    <dbReference type="NCBI Taxonomy" id="476213"/>
    <lineage>
        <taxon>Bacteria</taxon>
        <taxon>Pseudomonadati</taxon>
        <taxon>Pseudomonadota</taxon>
        <taxon>Gammaproteobacteria</taxon>
        <taxon>Enterobacterales</taxon>
        <taxon>Enterobacteriaceae</taxon>
        <taxon>Salmonella</taxon>
    </lineage>
</organism>